<protein>
    <recommendedName>
        <fullName>ETHYLENE INSENSITIVE 3-like 3 protein</fullName>
    </recommendedName>
</protein>
<proteinExistence type="evidence at protein level"/>
<organism>
    <name type="scientific">Arabidopsis thaliana</name>
    <name type="common">Mouse-ear cress</name>
    <dbReference type="NCBI Taxonomy" id="3702"/>
    <lineage>
        <taxon>Eukaryota</taxon>
        <taxon>Viridiplantae</taxon>
        <taxon>Streptophyta</taxon>
        <taxon>Embryophyta</taxon>
        <taxon>Tracheophyta</taxon>
        <taxon>Spermatophyta</taxon>
        <taxon>Magnoliopsida</taxon>
        <taxon>eudicotyledons</taxon>
        <taxon>Gunneridae</taxon>
        <taxon>Pentapetalae</taxon>
        <taxon>rosids</taxon>
        <taxon>malvids</taxon>
        <taxon>Brassicales</taxon>
        <taxon>Brassicaceae</taxon>
        <taxon>Camelineae</taxon>
        <taxon>Arabidopsis</taxon>
    </lineage>
</organism>
<feature type="chain" id="PRO_0000113501" description="ETHYLENE INSENSITIVE 3-like 3 protein">
    <location>
        <begin position="1"/>
        <end position="567"/>
    </location>
</feature>
<feature type="DNA-binding region">
    <location>
        <begin position="162"/>
        <end position="288"/>
    </location>
</feature>
<feature type="region of interest" description="Disordered" evidence="3">
    <location>
        <begin position="55"/>
        <end position="81"/>
    </location>
</feature>
<feature type="region of interest" description="Disordered" evidence="3">
    <location>
        <begin position="286"/>
        <end position="393"/>
    </location>
</feature>
<feature type="coiled-coil region" evidence="2">
    <location>
        <begin position="24"/>
        <end position="44"/>
    </location>
</feature>
<feature type="compositionally biased region" description="Basic and acidic residues" evidence="3">
    <location>
        <begin position="69"/>
        <end position="79"/>
    </location>
</feature>
<feature type="compositionally biased region" description="Polar residues" evidence="3">
    <location>
        <begin position="286"/>
        <end position="299"/>
    </location>
</feature>
<feature type="compositionally biased region" description="Basic and acidic residues" evidence="3">
    <location>
        <begin position="300"/>
        <end position="312"/>
    </location>
</feature>
<feature type="compositionally biased region" description="Basic residues" evidence="3">
    <location>
        <begin position="363"/>
        <end position="372"/>
    </location>
</feature>
<feature type="helix" evidence="8">
    <location>
        <begin position="171"/>
        <end position="181"/>
    </location>
</feature>
<feature type="strand" evidence="8">
    <location>
        <begin position="182"/>
        <end position="187"/>
    </location>
</feature>
<feature type="turn" evidence="8">
    <location>
        <begin position="194"/>
        <end position="196"/>
    </location>
</feature>
<feature type="helix" evidence="8">
    <location>
        <begin position="199"/>
        <end position="202"/>
    </location>
</feature>
<feature type="helix" evidence="8">
    <location>
        <begin position="209"/>
        <end position="214"/>
    </location>
</feature>
<feature type="helix" evidence="8">
    <location>
        <begin position="227"/>
        <end position="229"/>
    </location>
</feature>
<feature type="helix" evidence="8">
    <location>
        <begin position="232"/>
        <end position="245"/>
    </location>
</feature>
<feature type="helix" evidence="8">
    <location>
        <begin position="247"/>
        <end position="249"/>
    </location>
</feature>
<feature type="helix" evidence="8">
    <location>
        <begin position="250"/>
        <end position="255"/>
    </location>
</feature>
<feature type="turn" evidence="8">
    <location>
        <begin position="256"/>
        <end position="259"/>
    </location>
</feature>
<feature type="strand" evidence="8">
    <location>
        <begin position="260"/>
        <end position="263"/>
    </location>
</feature>
<feature type="turn" evidence="8">
    <location>
        <begin position="264"/>
        <end position="266"/>
    </location>
</feature>
<feature type="helix" evidence="8">
    <location>
        <begin position="270"/>
        <end position="279"/>
    </location>
</feature>
<feature type="turn" evidence="8">
    <location>
        <begin position="280"/>
        <end position="284"/>
    </location>
</feature>
<gene>
    <name type="primary">EIL3</name>
    <name type="ordered locus">At1g73730</name>
    <name type="ORF">F25P22.15</name>
</gene>
<reference key="1">
    <citation type="journal article" date="1997" name="Cell">
        <title>Activation of the ethylene gas response pathway in Arabidopsis by the nuclear protein ETHYLENE-INSENSITIVE3 and related proteins.</title>
        <authorList>
            <person name="Chao Q."/>
            <person name="Rothenberg M."/>
            <person name="Solano R."/>
            <person name="Roman G."/>
            <person name="Terzaghi W."/>
            <person name="Ecker J.R."/>
        </authorList>
    </citation>
    <scope>NUCLEOTIDE SEQUENCE [MRNA]</scope>
    <scope>FUNCTION</scope>
    <source>
        <strain>cv. Columbia</strain>
    </source>
</reference>
<reference key="2">
    <citation type="journal article" date="2000" name="Nature">
        <title>Sequence and analysis of chromosome 1 of the plant Arabidopsis thaliana.</title>
        <authorList>
            <person name="Theologis A."/>
            <person name="Ecker J.R."/>
            <person name="Palm C.J."/>
            <person name="Federspiel N.A."/>
            <person name="Kaul S."/>
            <person name="White O."/>
            <person name="Alonso J."/>
            <person name="Altafi H."/>
            <person name="Araujo R."/>
            <person name="Bowman C.L."/>
            <person name="Brooks S.Y."/>
            <person name="Buehler E."/>
            <person name="Chan A."/>
            <person name="Chao Q."/>
            <person name="Chen H."/>
            <person name="Cheuk R.F."/>
            <person name="Chin C.W."/>
            <person name="Chung M.K."/>
            <person name="Conn L."/>
            <person name="Conway A.B."/>
            <person name="Conway A.R."/>
            <person name="Creasy T.H."/>
            <person name="Dewar K."/>
            <person name="Dunn P."/>
            <person name="Etgu P."/>
            <person name="Feldblyum T.V."/>
            <person name="Feng J.-D."/>
            <person name="Fong B."/>
            <person name="Fujii C.Y."/>
            <person name="Gill J.E."/>
            <person name="Goldsmith A.D."/>
            <person name="Haas B."/>
            <person name="Hansen N.F."/>
            <person name="Hughes B."/>
            <person name="Huizar L."/>
            <person name="Hunter J.L."/>
            <person name="Jenkins J."/>
            <person name="Johnson-Hopson C."/>
            <person name="Khan S."/>
            <person name="Khaykin E."/>
            <person name="Kim C.J."/>
            <person name="Koo H.L."/>
            <person name="Kremenetskaia I."/>
            <person name="Kurtz D.B."/>
            <person name="Kwan A."/>
            <person name="Lam B."/>
            <person name="Langin-Hooper S."/>
            <person name="Lee A."/>
            <person name="Lee J.M."/>
            <person name="Lenz C.A."/>
            <person name="Li J.H."/>
            <person name="Li Y.-P."/>
            <person name="Lin X."/>
            <person name="Liu S.X."/>
            <person name="Liu Z.A."/>
            <person name="Luros J.S."/>
            <person name="Maiti R."/>
            <person name="Marziali A."/>
            <person name="Militscher J."/>
            <person name="Miranda M."/>
            <person name="Nguyen M."/>
            <person name="Nierman W.C."/>
            <person name="Osborne B.I."/>
            <person name="Pai G."/>
            <person name="Peterson J."/>
            <person name="Pham P.K."/>
            <person name="Rizzo M."/>
            <person name="Rooney T."/>
            <person name="Rowley D."/>
            <person name="Sakano H."/>
            <person name="Salzberg S.L."/>
            <person name="Schwartz J.R."/>
            <person name="Shinn P."/>
            <person name="Southwick A.M."/>
            <person name="Sun H."/>
            <person name="Tallon L.J."/>
            <person name="Tambunga G."/>
            <person name="Toriumi M.J."/>
            <person name="Town C.D."/>
            <person name="Utterback T."/>
            <person name="Van Aken S."/>
            <person name="Vaysberg M."/>
            <person name="Vysotskaia V.S."/>
            <person name="Walker M."/>
            <person name="Wu D."/>
            <person name="Yu G."/>
            <person name="Fraser C.M."/>
            <person name="Venter J.C."/>
            <person name="Davis R.W."/>
        </authorList>
    </citation>
    <scope>NUCLEOTIDE SEQUENCE [LARGE SCALE GENOMIC DNA]</scope>
    <source>
        <strain>cv. Columbia</strain>
    </source>
</reference>
<reference key="3">
    <citation type="journal article" date="2017" name="Plant J.">
        <title>Araport11: a complete reannotation of the Arabidopsis thaliana reference genome.</title>
        <authorList>
            <person name="Cheng C.Y."/>
            <person name="Krishnakumar V."/>
            <person name="Chan A.P."/>
            <person name="Thibaud-Nissen F."/>
            <person name="Schobel S."/>
            <person name="Town C.D."/>
        </authorList>
    </citation>
    <scope>GENOME REANNOTATION</scope>
    <source>
        <strain>cv. Columbia</strain>
    </source>
</reference>
<reference key="4">
    <citation type="journal article" date="2003" name="Science">
        <title>Empirical analysis of transcriptional activity in the Arabidopsis genome.</title>
        <authorList>
            <person name="Yamada K."/>
            <person name="Lim J."/>
            <person name="Dale J.M."/>
            <person name="Chen H."/>
            <person name="Shinn P."/>
            <person name="Palm C.J."/>
            <person name="Southwick A.M."/>
            <person name="Wu H.C."/>
            <person name="Kim C.J."/>
            <person name="Nguyen M."/>
            <person name="Pham P.K."/>
            <person name="Cheuk R.F."/>
            <person name="Karlin-Newmann G."/>
            <person name="Liu S.X."/>
            <person name="Lam B."/>
            <person name="Sakano H."/>
            <person name="Wu T."/>
            <person name="Yu G."/>
            <person name="Miranda M."/>
            <person name="Quach H.L."/>
            <person name="Tripp M."/>
            <person name="Chang C.H."/>
            <person name="Lee J.M."/>
            <person name="Toriumi M.J."/>
            <person name="Chan M.M."/>
            <person name="Tang C.C."/>
            <person name="Onodera C.S."/>
            <person name="Deng J.M."/>
            <person name="Akiyama K."/>
            <person name="Ansari Y."/>
            <person name="Arakawa T."/>
            <person name="Banh J."/>
            <person name="Banno F."/>
            <person name="Bowser L."/>
            <person name="Brooks S.Y."/>
            <person name="Carninci P."/>
            <person name="Chao Q."/>
            <person name="Choy N."/>
            <person name="Enju A."/>
            <person name="Goldsmith A.D."/>
            <person name="Gurjal M."/>
            <person name="Hansen N.F."/>
            <person name="Hayashizaki Y."/>
            <person name="Johnson-Hopson C."/>
            <person name="Hsuan V.W."/>
            <person name="Iida K."/>
            <person name="Karnes M."/>
            <person name="Khan S."/>
            <person name="Koesema E."/>
            <person name="Ishida J."/>
            <person name="Jiang P.X."/>
            <person name="Jones T."/>
            <person name="Kawai J."/>
            <person name="Kamiya A."/>
            <person name="Meyers C."/>
            <person name="Nakajima M."/>
            <person name="Narusaka M."/>
            <person name="Seki M."/>
            <person name="Sakurai T."/>
            <person name="Satou M."/>
            <person name="Tamse R."/>
            <person name="Vaysberg M."/>
            <person name="Wallender E.K."/>
            <person name="Wong C."/>
            <person name="Yamamura Y."/>
            <person name="Yuan S."/>
            <person name="Shinozaki K."/>
            <person name="Davis R.W."/>
            <person name="Theologis A."/>
            <person name="Ecker J.R."/>
        </authorList>
    </citation>
    <scope>NUCLEOTIDE SEQUENCE [LARGE SCALE MRNA]</scope>
    <source>
        <strain>cv. Columbia</strain>
    </source>
</reference>
<reference key="5">
    <citation type="journal article" date="1998" name="Genes Dev.">
        <title>Nuclear events in ethylene signaling: a transcriptional cascade mediated by ETHYLENE-INSENSITIVE3 and ETHYLENE-RESPONSE-FACTOR1.</title>
        <authorList>
            <person name="Solano R."/>
            <person name="Stepanova A.N."/>
            <person name="Chao Q."/>
            <person name="Ecker J.R."/>
        </authorList>
    </citation>
    <scope>CHARACTERIZATION</scope>
    <scope>FUNCTION</scope>
</reference>
<reference key="6">
    <citation type="journal article" date="2005" name="J. Mol. Biol.">
        <title>Solution structure of the major DNA-binding domain of Arabidopsis thaliana ethylene-insensitive3-like3.</title>
        <authorList>
            <person name="Yamasaki K."/>
            <person name="Kigawa T."/>
            <person name="Inoue M."/>
            <person name="Yamasaki T."/>
            <person name="Yabuki T."/>
            <person name="Aoki M."/>
            <person name="Seki E."/>
            <person name="Matsuda T."/>
            <person name="Tomo Y."/>
            <person name="Terada T."/>
            <person name="Shirouzu M."/>
            <person name="Tanaka A."/>
            <person name="Seki M."/>
            <person name="Shinozaki K."/>
            <person name="Yokoyama S."/>
        </authorList>
    </citation>
    <scope>STRUCTURE BY NMR OF 162-288</scope>
</reference>
<reference key="7">
    <citation type="journal article" date="2008" name="Plant Physiol.">
        <title>MYB72 is required in early signaling steps of rhizobacteria-induced systemic resistance in Arabidopsis.</title>
        <authorList>
            <person name="Van der Ent S."/>
            <person name="Verhagen B.W.M."/>
            <person name="Van Doorn R."/>
            <person name="Bakker D."/>
            <person name="Verlaan M.G."/>
            <person name="Pel M.J.C."/>
            <person name="Joosten R.G."/>
            <person name="Proveniers M.C.G."/>
            <person name="Van Loon L.C."/>
            <person name="Ton J."/>
            <person name="Pieterse C.M.J."/>
        </authorList>
    </citation>
    <scope>INTERACTION WITH MYB72</scope>
    <source>
        <strain>cv. Columbia</strain>
    </source>
</reference>
<accession>O23116</accession>
<dbReference type="EMBL" id="AF004215">
    <property type="protein sequence ID" value="AAC49748.1"/>
    <property type="molecule type" value="mRNA"/>
</dbReference>
<dbReference type="EMBL" id="AC012679">
    <property type="protein sequence ID" value="AAG52067.1"/>
    <property type="molecule type" value="Genomic_DNA"/>
</dbReference>
<dbReference type="EMBL" id="CP002684">
    <property type="protein sequence ID" value="AEE35502.1"/>
    <property type="molecule type" value="Genomic_DNA"/>
</dbReference>
<dbReference type="EMBL" id="AY070044">
    <property type="protein sequence ID" value="AAL49801.1"/>
    <property type="molecule type" value="mRNA"/>
</dbReference>
<dbReference type="EMBL" id="AY133839">
    <property type="protein sequence ID" value="AAM91773.1"/>
    <property type="molecule type" value="mRNA"/>
</dbReference>
<dbReference type="PIR" id="E96764">
    <property type="entry name" value="E96764"/>
</dbReference>
<dbReference type="RefSeq" id="NP_177514.1">
    <property type="nucleotide sequence ID" value="NM_106032.5"/>
</dbReference>
<dbReference type="PDB" id="1WIJ">
    <property type="method" value="NMR"/>
    <property type="chains" value="A=162-288"/>
</dbReference>
<dbReference type="PDBsum" id="1WIJ"/>
<dbReference type="SMR" id="O23116"/>
<dbReference type="BioGRID" id="28927">
    <property type="interactions" value="4"/>
</dbReference>
<dbReference type="FunCoup" id="O23116">
    <property type="interactions" value="2009"/>
</dbReference>
<dbReference type="IntAct" id="O23116">
    <property type="interactions" value="3"/>
</dbReference>
<dbReference type="STRING" id="3702.O23116"/>
<dbReference type="iPTMnet" id="O23116"/>
<dbReference type="PaxDb" id="3702-AT1G73730.1"/>
<dbReference type="ProteomicsDB" id="222674"/>
<dbReference type="EnsemblPlants" id="AT1G73730.1">
    <property type="protein sequence ID" value="AT1G73730.1"/>
    <property type="gene ID" value="AT1G73730"/>
</dbReference>
<dbReference type="GeneID" id="843708"/>
<dbReference type="Gramene" id="AT1G73730.1">
    <property type="protein sequence ID" value="AT1G73730.1"/>
    <property type="gene ID" value="AT1G73730"/>
</dbReference>
<dbReference type="KEGG" id="ath:AT1G73730"/>
<dbReference type="Araport" id="AT1G73730"/>
<dbReference type="TAIR" id="AT1G73730">
    <property type="gene designation" value="EIL3"/>
</dbReference>
<dbReference type="eggNOG" id="ENOG502QQCD">
    <property type="taxonomic scope" value="Eukaryota"/>
</dbReference>
<dbReference type="HOGENOM" id="CLU_027306_1_1_1"/>
<dbReference type="InParanoid" id="O23116"/>
<dbReference type="OrthoDB" id="2017676at2759"/>
<dbReference type="PhylomeDB" id="O23116"/>
<dbReference type="EvolutionaryTrace" id="O23116"/>
<dbReference type="PRO" id="PR:O23116"/>
<dbReference type="Proteomes" id="UP000006548">
    <property type="component" value="Chromosome 1"/>
</dbReference>
<dbReference type="ExpressionAtlas" id="O23116">
    <property type="expression patterns" value="baseline and differential"/>
</dbReference>
<dbReference type="GO" id="GO:0005634">
    <property type="term" value="C:nucleus"/>
    <property type="evidence" value="ECO:0007669"/>
    <property type="project" value="UniProtKB-SubCell"/>
</dbReference>
<dbReference type="GO" id="GO:0003677">
    <property type="term" value="F:DNA binding"/>
    <property type="evidence" value="ECO:0000314"/>
    <property type="project" value="TAIR"/>
</dbReference>
<dbReference type="GO" id="GO:0003700">
    <property type="term" value="F:DNA-binding transcription factor activity"/>
    <property type="evidence" value="ECO:0000250"/>
    <property type="project" value="TAIR"/>
</dbReference>
<dbReference type="GO" id="GO:0000976">
    <property type="term" value="F:transcription cis-regulatory region binding"/>
    <property type="evidence" value="ECO:0000353"/>
    <property type="project" value="TAIR"/>
</dbReference>
<dbReference type="GO" id="GO:0009970">
    <property type="term" value="P:cellular response to sulfate starvation"/>
    <property type="evidence" value="ECO:0000315"/>
    <property type="project" value="TAIR"/>
</dbReference>
<dbReference type="GO" id="GO:0009873">
    <property type="term" value="P:ethylene-activated signaling pathway"/>
    <property type="evidence" value="ECO:0000304"/>
    <property type="project" value="TAIR"/>
</dbReference>
<dbReference type="GO" id="GO:0006355">
    <property type="term" value="P:regulation of DNA-templated transcription"/>
    <property type="evidence" value="ECO:0000304"/>
    <property type="project" value="TAIR"/>
</dbReference>
<dbReference type="GO" id="GO:0042762">
    <property type="term" value="P:regulation of sulfur metabolic process"/>
    <property type="evidence" value="ECO:0000315"/>
    <property type="project" value="TAIR"/>
</dbReference>
<dbReference type="FunFam" id="1.10.3180.10:FF:000001">
    <property type="entry name" value="Ethylene insensitive 3-like 1"/>
    <property type="match status" value="1"/>
</dbReference>
<dbReference type="FunFam" id="1.10.3180.10:FF:000002">
    <property type="entry name" value="Ethylene insensitive 3-like 1"/>
    <property type="match status" value="1"/>
</dbReference>
<dbReference type="Gene3D" id="1.10.3180.10">
    <property type="entry name" value="DNA-binding domain of EIN3-like"/>
    <property type="match status" value="2"/>
</dbReference>
<dbReference type="InterPro" id="IPR006957">
    <property type="entry name" value="EIN3"/>
</dbReference>
<dbReference type="InterPro" id="IPR047091">
    <property type="entry name" value="EIN3-like_DNA-bd"/>
</dbReference>
<dbReference type="InterPro" id="IPR023278">
    <property type="entry name" value="Ethylene_insens-like_DNA-bd"/>
</dbReference>
<dbReference type="PANTHER" id="PTHR33305">
    <property type="entry name" value="ETHYLENE INSENSITIVE 3-LIKE 2 PROTEIN"/>
    <property type="match status" value="1"/>
</dbReference>
<dbReference type="PANTHER" id="PTHR33305:SF30">
    <property type="entry name" value="ETHYLENE INSENSITIVE 3-LIKE 3 PROTEIN"/>
    <property type="match status" value="1"/>
</dbReference>
<dbReference type="Pfam" id="PF04873">
    <property type="entry name" value="EIN3_DNA-bd"/>
    <property type="match status" value="1"/>
</dbReference>
<dbReference type="SUPFAM" id="SSF116768">
    <property type="entry name" value="DNA-binding domain of EIN3-like"/>
    <property type="match status" value="1"/>
</dbReference>
<keyword id="KW-0002">3D-structure</keyword>
<keyword id="KW-0175">Coiled coil</keyword>
<keyword id="KW-0238">DNA-binding</keyword>
<keyword id="KW-0936">Ethylene signaling pathway</keyword>
<keyword id="KW-0539">Nucleus</keyword>
<keyword id="KW-1185">Reference proteome</keyword>
<keyword id="KW-0804">Transcription</keyword>
<keyword id="KW-0805">Transcription regulation</keyword>
<evidence type="ECO:0000250" key="1"/>
<evidence type="ECO:0000255" key="2"/>
<evidence type="ECO:0000256" key="3">
    <source>
        <dbReference type="SAM" id="MobiDB-lite"/>
    </source>
</evidence>
<evidence type="ECO:0000269" key="4">
    <source>
    </source>
</evidence>
<evidence type="ECO:0000269" key="5">
    <source>
    </source>
</evidence>
<evidence type="ECO:0000269" key="6">
    <source>
    </source>
</evidence>
<evidence type="ECO:0000305" key="7"/>
<evidence type="ECO:0007829" key="8">
    <source>
        <dbReference type="PDB" id="1WIJ"/>
    </source>
</evidence>
<comment type="function">
    <text evidence="5 6">Probable transcription factor that may be involved in the ethylene response pathway.</text>
</comment>
<comment type="subunit">
    <text evidence="4">Interacts with MYB72.</text>
</comment>
<comment type="subcellular location">
    <subcellularLocation>
        <location evidence="1">Nucleus</location>
    </subcellularLocation>
</comment>
<comment type="similarity">
    <text evidence="7">Belongs to the EIN3 family.</text>
</comment>
<sequence length="567" mass="64042">MGDLAMSVADIRMENEPDDLASDNVAEIDVSDEEIDADDLERRMWKDRVRLKRIKERQKAGSQGAQTKETPKKISDQAQRKKMSRAQDGILKYMLKLMEVCKVRGFVYGIIPEKGKPVSGSSDNIRAWWKEKVKFDKNGPAAIAKYEEECLAFGKSDGNRNSQFVLQDLQDATLGSLLSSLMQHCDPPQRKYPLEKGTPPPWWPTGNEEWWVKLGLPKSQSPPYRKPHDLKKMWKVGVLTAVINHMLPDIAKIKRHVRQSKCLQDKMTAKESAIWLAVLNQEESLIQQPSSDNGNSNVTETHRRGNNADRRKPVVNSDSDYDVDGTEEASGSVSSKDSRRNQIQKEQPTAISHSVRDQDKAEKHRRRKRPRIRSGTVNRQEEEQPEAQQRNILPDMNHVDAPLLEYNINGTHQEDDVVDPNIALGPEDNGLELVVPEFNNNYTYLPLVNEQTMMPVDERPMLYGPNPNQELQFGSGYNFYNPSAVFVHNQEDDILHTQIEMNTQAPPHNSGFEEAPGGVLQPLGLLGNEDGVTGSELPQYQSGILSPLTDLDFDYGGFGDDFSWFGA</sequence>
<name>EIL3_ARATH</name>